<accession>Q87B10</accession>
<evidence type="ECO:0000255" key="1">
    <source>
        <dbReference type="HAMAP-Rule" id="MF_00140"/>
    </source>
</evidence>
<proteinExistence type="inferred from homology"/>
<sequence>MSIRVLTGITTSGTPHLGNYVGAIRPAIRAAGAPGTESFYFLADLHSLIKVQDPERTQRSTLEIAATWLACGLDPEKVWLYRQSDVPEITELMWLLTCVAGKGILNRAHAYKAVVDKNRSHGDDDDAGITAGLFMYPVLMAADILLFNAHQVPVGRDQIQHIEMARDFAQRFNHIYGGEYLVLPEAAIDEQVATLPGLDGRKMSKSYGNTMPLFCTREELKKYVFSIVTDSRAPGEPKEAVGSAVFQLYQAFAGVEECSMFAQALVEGLGWGEAKVRLFERIDAEVAPLRERYEDFMRRPADIEAMLRDSAGRLRERDAIPLLARLREAVGLRSLSLCMVSAVPVPQEKVALPVLKQYREQDGRFYFKLIDGQGAVLVQSRGFASPRDAGQWIALFKQVVSAEALVSPMLEPVADPVVVLAALRRLREAGLDLYT</sequence>
<reference key="1">
    <citation type="journal article" date="2003" name="J. Bacteriol.">
        <title>Comparative analyses of the complete genome sequences of Pierce's disease and citrus variegated chlorosis strains of Xylella fastidiosa.</title>
        <authorList>
            <person name="Van Sluys M.A."/>
            <person name="de Oliveira M.C."/>
            <person name="Monteiro-Vitorello C.B."/>
            <person name="Miyaki C.Y."/>
            <person name="Furlan L.R."/>
            <person name="Camargo L.E.A."/>
            <person name="da Silva A.C.R."/>
            <person name="Moon D.H."/>
            <person name="Takita M.A."/>
            <person name="Lemos E.G.M."/>
            <person name="Machado M.A."/>
            <person name="Ferro M.I.T."/>
            <person name="da Silva F.R."/>
            <person name="Goldman M.H.S."/>
            <person name="Goldman G.H."/>
            <person name="Lemos M.V.F."/>
            <person name="El-Dorry H."/>
            <person name="Tsai S.M."/>
            <person name="Carrer H."/>
            <person name="Carraro D.M."/>
            <person name="de Oliveira R.C."/>
            <person name="Nunes L.R."/>
            <person name="Siqueira W.J."/>
            <person name="Coutinho L.L."/>
            <person name="Kimura E.T."/>
            <person name="Ferro E.S."/>
            <person name="Harakava R."/>
            <person name="Kuramae E.E."/>
            <person name="Marino C.L."/>
            <person name="Giglioti E."/>
            <person name="Abreu I.L."/>
            <person name="Alves L.M.C."/>
            <person name="do Amaral A.M."/>
            <person name="Baia G.S."/>
            <person name="Blanco S.R."/>
            <person name="Brito M.S."/>
            <person name="Cannavan F.S."/>
            <person name="Celestino A.V."/>
            <person name="da Cunha A.F."/>
            <person name="Fenille R.C."/>
            <person name="Ferro J.A."/>
            <person name="Formighieri E.F."/>
            <person name="Kishi L.T."/>
            <person name="Leoni S.G."/>
            <person name="Oliveira A.R."/>
            <person name="Rosa V.E. Jr."/>
            <person name="Sassaki F.T."/>
            <person name="Sena J.A.D."/>
            <person name="de Souza A.A."/>
            <person name="Truffi D."/>
            <person name="Tsukumo F."/>
            <person name="Yanai G.M."/>
            <person name="Zaros L.G."/>
            <person name="Civerolo E.L."/>
            <person name="Simpson A.J.G."/>
            <person name="Almeida N.F. Jr."/>
            <person name="Setubal J.C."/>
            <person name="Kitajima J.P."/>
        </authorList>
    </citation>
    <scope>NUCLEOTIDE SEQUENCE [LARGE SCALE GENOMIC DNA]</scope>
    <source>
        <strain>Temecula1 / ATCC 700964</strain>
    </source>
</reference>
<organism>
    <name type="scientific">Xylella fastidiosa (strain Temecula1 / ATCC 700964)</name>
    <dbReference type="NCBI Taxonomy" id="183190"/>
    <lineage>
        <taxon>Bacteria</taxon>
        <taxon>Pseudomonadati</taxon>
        <taxon>Pseudomonadota</taxon>
        <taxon>Gammaproteobacteria</taxon>
        <taxon>Lysobacterales</taxon>
        <taxon>Lysobacteraceae</taxon>
        <taxon>Xylella</taxon>
    </lineage>
</organism>
<dbReference type="EC" id="6.1.1.2" evidence="1"/>
<dbReference type="EMBL" id="AE009442">
    <property type="protein sequence ID" value="AAO29490.1"/>
    <property type="molecule type" value="Genomic_DNA"/>
</dbReference>
<dbReference type="RefSeq" id="WP_004089825.1">
    <property type="nucleotide sequence ID" value="NC_004556.1"/>
</dbReference>
<dbReference type="SMR" id="Q87B10"/>
<dbReference type="KEGG" id="xft:PD_1650"/>
<dbReference type="HOGENOM" id="CLU_029244_5_1_6"/>
<dbReference type="Proteomes" id="UP000002516">
    <property type="component" value="Chromosome"/>
</dbReference>
<dbReference type="GO" id="GO:0005829">
    <property type="term" value="C:cytosol"/>
    <property type="evidence" value="ECO:0007669"/>
    <property type="project" value="TreeGrafter"/>
</dbReference>
<dbReference type="GO" id="GO:0005524">
    <property type="term" value="F:ATP binding"/>
    <property type="evidence" value="ECO:0007669"/>
    <property type="project" value="UniProtKB-UniRule"/>
</dbReference>
<dbReference type="GO" id="GO:0004830">
    <property type="term" value="F:tryptophan-tRNA ligase activity"/>
    <property type="evidence" value="ECO:0007669"/>
    <property type="project" value="UniProtKB-UniRule"/>
</dbReference>
<dbReference type="GO" id="GO:0006436">
    <property type="term" value="P:tryptophanyl-tRNA aminoacylation"/>
    <property type="evidence" value="ECO:0007669"/>
    <property type="project" value="UniProtKB-UniRule"/>
</dbReference>
<dbReference type="CDD" id="cd00806">
    <property type="entry name" value="TrpRS_core"/>
    <property type="match status" value="1"/>
</dbReference>
<dbReference type="FunFam" id="1.10.240.10:FF:000005">
    <property type="entry name" value="Tryptophan--tRNA ligase"/>
    <property type="match status" value="1"/>
</dbReference>
<dbReference type="FunFam" id="3.40.50.620:FF:000144">
    <property type="entry name" value="Tryptophan--tRNA ligase"/>
    <property type="match status" value="1"/>
</dbReference>
<dbReference type="Gene3D" id="3.40.50.620">
    <property type="entry name" value="HUPs"/>
    <property type="match status" value="1"/>
</dbReference>
<dbReference type="Gene3D" id="1.10.240.10">
    <property type="entry name" value="Tyrosyl-Transfer RNA Synthetase"/>
    <property type="match status" value="1"/>
</dbReference>
<dbReference type="HAMAP" id="MF_00140_B">
    <property type="entry name" value="Trp_tRNA_synth_B"/>
    <property type="match status" value="1"/>
</dbReference>
<dbReference type="InterPro" id="IPR002305">
    <property type="entry name" value="aa-tRNA-synth_Ic"/>
</dbReference>
<dbReference type="InterPro" id="IPR014729">
    <property type="entry name" value="Rossmann-like_a/b/a_fold"/>
</dbReference>
<dbReference type="InterPro" id="IPR002306">
    <property type="entry name" value="Trp-tRNA-ligase"/>
</dbReference>
<dbReference type="InterPro" id="IPR024109">
    <property type="entry name" value="Trp-tRNA-ligase_bac-type"/>
</dbReference>
<dbReference type="InterPro" id="IPR050203">
    <property type="entry name" value="Trp-tRNA_synthetase"/>
</dbReference>
<dbReference type="InterPro" id="IPR036913">
    <property type="entry name" value="YegP-like_sf"/>
</dbReference>
<dbReference type="NCBIfam" id="NF008923">
    <property type="entry name" value="PRK12284.1"/>
    <property type="match status" value="1"/>
</dbReference>
<dbReference type="NCBIfam" id="TIGR00233">
    <property type="entry name" value="trpS"/>
    <property type="match status" value="1"/>
</dbReference>
<dbReference type="PANTHER" id="PTHR43766">
    <property type="entry name" value="TRYPTOPHAN--TRNA LIGASE, MITOCHONDRIAL"/>
    <property type="match status" value="1"/>
</dbReference>
<dbReference type="PANTHER" id="PTHR43766:SF1">
    <property type="entry name" value="TRYPTOPHAN--TRNA LIGASE, MITOCHONDRIAL"/>
    <property type="match status" value="1"/>
</dbReference>
<dbReference type="Pfam" id="PF00579">
    <property type="entry name" value="tRNA-synt_1b"/>
    <property type="match status" value="1"/>
</dbReference>
<dbReference type="PRINTS" id="PR01039">
    <property type="entry name" value="TRNASYNTHTRP"/>
</dbReference>
<dbReference type="SUPFAM" id="SSF52374">
    <property type="entry name" value="Nucleotidylyl transferase"/>
    <property type="match status" value="1"/>
</dbReference>
<dbReference type="SUPFAM" id="SSF160113">
    <property type="entry name" value="YegP-like"/>
    <property type="match status" value="1"/>
</dbReference>
<keyword id="KW-0030">Aminoacyl-tRNA synthetase</keyword>
<keyword id="KW-0067">ATP-binding</keyword>
<keyword id="KW-0963">Cytoplasm</keyword>
<keyword id="KW-0436">Ligase</keyword>
<keyword id="KW-0547">Nucleotide-binding</keyword>
<keyword id="KW-0648">Protein biosynthesis</keyword>
<keyword id="KW-1185">Reference proteome</keyword>
<comment type="function">
    <text evidence="1">Catalyzes the attachment of tryptophan to tRNA(Trp).</text>
</comment>
<comment type="catalytic activity">
    <reaction evidence="1">
        <text>tRNA(Trp) + L-tryptophan + ATP = L-tryptophyl-tRNA(Trp) + AMP + diphosphate + H(+)</text>
        <dbReference type="Rhea" id="RHEA:24080"/>
        <dbReference type="Rhea" id="RHEA-COMP:9671"/>
        <dbReference type="Rhea" id="RHEA-COMP:9705"/>
        <dbReference type="ChEBI" id="CHEBI:15378"/>
        <dbReference type="ChEBI" id="CHEBI:30616"/>
        <dbReference type="ChEBI" id="CHEBI:33019"/>
        <dbReference type="ChEBI" id="CHEBI:57912"/>
        <dbReference type="ChEBI" id="CHEBI:78442"/>
        <dbReference type="ChEBI" id="CHEBI:78535"/>
        <dbReference type="ChEBI" id="CHEBI:456215"/>
        <dbReference type="EC" id="6.1.1.2"/>
    </reaction>
</comment>
<comment type="subunit">
    <text evidence="1">Homodimer.</text>
</comment>
<comment type="subcellular location">
    <subcellularLocation>
        <location evidence="1">Cytoplasm</location>
    </subcellularLocation>
</comment>
<comment type="similarity">
    <text evidence="1">Belongs to the class-I aminoacyl-tRNA synthetase family.</text>
</comment>
<gene>
    <name evidence="1" type="primary">trpS</name>
    <name type="ordered locus">PD_1650</name>
</gene>
<feature type="chain" id="PRO_0000136715" description="Tryptophan--tRNA ligase">
    <location>
        <begin position="1"/>
        <end position="435"/>
    </location>
</feature>
<feature type="short sequence motif" description="'HIGH' region" evidence="1">
    <location>
        <begin position="11"/>
        <end position="19"/>
    </location>
</feature>
<feature type="short sequence motif" description="'KMSKS' region" evidence="1">
    <location>
        <begin position="202"/>
        <end position="206"/>
    </location>
</feature>
<feature type="binding site" evidence="1">
    <location>
        <begin position="10"/>
        <end position="12"/>
    </location>
    <ligand>
        <name>ATP</name>
        <dbReference type="ChEBI" id="CHEBI:30616"/>
    </ligand>
</feature>
<feature type="binding site" evidence="1">
    <location>
        <begin position="18"/>
        <end position="19"/>
    </location>
    <ligand>
        <name>ATP</name>
        <dbReference type="ChEBI" id="CHEBI:30616"/>
    </ligand>
</feature>
<feature type="binding site" evidence="1">
    <location>
        <position position="143"/>
    </location>
    <ligand>
        <name>L-tryptophan</name>
        <dbReference type="ChEBI" id="CHEBI:57912"/>
    </ligand>
</feature>
<feature type="binding site" evidence="1">
    <location>
        <begin position="155"/>
        <end position="157"/>
    </location>
    <ligand>
        <name>ATP</name>
        <dbReference type="ChEBI" id="CHEBI:30616"/>
    </ligand>
</feature>
<feature type="binding site" evidence="1">
    <location>
        <position position="195"/>
    </location>
    <ligand>
        <name>ATP</name>
        <dbReference type="ChEBI" id="CHEBI:30616"/>
    </ligand>
</feature>
<feature type="binding site" evidence="1">
    <location>
        <begin position="202"/>
        <end position="206"/>
    </location>
    <ligand>
        <name>ATP</name>
        <dbReference type="ChEBI" id="CHEBI:30616"/>
    </ligand>
</feature>
<name>SYW_XYLFT</name>
<protein>
    <recommendedName>
        <fullName evidence="1">Tryptophan--tRNA ligase</fullName>
        <ecNumber evidence="1">6.1.1.2</ecNumber>
    </recommendedName>
    <alternativeName>
        <fullName evidence="1">Tryptophanyl-tRNA synthetase</fullName>
        <shortName evidence="1">TrpRS</shortName>
    </alternativeName>
</protein>